<comment type="function">
    <text evidence="1">Cell division inhibitor that blocks the formation of polar Z ring septums. Rapidly oscillates between the poles of the cell to destabilize FtsZ filaments that have formed before they mature into polar Z rings. Prevents FtsZ polymerization.</text>
</comment>
<comment type="subunit">
    <text evidence="1">Interacts with MinD and FtsZ.</text>
</comment>
<comment type="similarity">
    <text evidence="1">Belongs to the MinC family.</text>
</comment>
<protein>
    <recommendedName>
        <fullName evidence="1">Probable septum site-determining protein MinC</fullName>
    </recommendedName>
</protein>
<reference key="1">
    <citation type="journal article" date="2002" name="Nucleic Acids Res.">
        <title>Genome sequence of Oceanobacillus iheyensis isolated from the Iheya Ridge and its unexpected adaptive capabilities to extreme environments.</title>
        <authorList>
            <person name="Takami H."/>
            <person name="Takaki Y."/>
            <person name="Uchiyama I."/>
        </authorList>
    </citation>
    <scope>NUCLEOTIDE SEQUENCE [LARGE SCALE GENOMIC DNA]</scope>
    <source>
        <strain>DSM 14371 / CIP 107618 / JCM 11309 / KCTC 3954 / HTE831</strain>
    </source>
</reference>
<dbReference type="EMBL" id="BA000028">
    <property type="protein sequence ID" value="BAC14006.1"/>
    <property type="molecule type" value="Genomic_DNA"/>
</dbReference>
<dbReference type="RefSeq" id="WP_011066445.1">
    <property type="nucleotide sequence ID" value="NC_004193.1"/>
</dbReference>
<dbReference type="SMR" id="Q8EPP3"/>
<dbReference type="STRING" id="221109.gene:10734296"/>
<dbReference type="KEGG" id="oih:OB2050"/>
<dbReference type="eggNOG" id="COG0850">
    <property type="taxonomic scope" value="Bacteria"/>
</dbReference>
<dbReference type="HOGENOM" id="CLU_048711_1_1_9"/>
<dbReference type="OrthoDB" id="9790810at2"/>
<dbReference type="PhylomeDB" id="Q8EPP3"/>
<dbReference type="Proteomes" id="UP000000822">
    <property type="component" value="Chromosome"/>
</dbReference>
<dbReference type="GO" id="GO:0000902">
    <property type="term" value="P:cell morphogenesis"/>
    <property type="evidence" value="ECO:0007669"/>
    <property type="project" value="InterPro"/>
</dbReference>
<dbReference type="GO" id="GO:0000917">
    <property type="term" value="P:division septum assembly"/>
    <property type="evidence" value="ECO:0007669"/>
    <property type="project" value="UniProtKB-KW"/>
</dbReference>
<dbReference type="GO" id="GO:1901891">
    <property type="term" value="P:regulation of cell septum assembly"/>
    <property type="evidence" value="ECO:0007669"/>
    <property type="project" value="InterPro"/>
</dbReference>
<dbReference type="Gene3D" id="2.160.20.70">
    <property type="match status" value="1"/>
</dbReference>
<dbReference type="Gene3D" id="3.30.160.540">
    <property type="match status" value="1"/>
</dbReference>
<dbReference type="HAMAP" id="MF_00267">
    <property type="entry name" value="MinC"/>
    <property type="match status" value="1"/>
</dbReference>
<dbReference type="InterPro" id="IPR016098">
    <property type="entry name" value="CAP/MinC_C"/>
</dbReference>
<dbReference type="InterPro" id="IPR013033">
    <property type="entry name" value="MinC"/>
</dbReference>
<dbReference type="InterPro" id="IPR036145">
    <property type="entry name" value="MinC_C_sf"/>
</dbReference>
<dbReference type="InterPro" id="IPR055219">
    <property type="entry name" value="MinC_N_1"/>
</dbReference>
<dbReference type="InterPro" id="IPR005526">
    <property type="entry name" value="Septum_form_inhib_MinC_C"/>
</dbReference>
<dbReference type="NCBIfam" id="TIGR01222">
    <property type="entry name" value="minC"/>
    <property type="match status" value="1"/>
</dbReference>
<dbReference type="NCBIfam" id="NF001772">
    <property type="entry name" value="PRK00513.1-3"/>
    <property type="match status" value="1"/>
</dbReference>
<dbReference type="PANTHER" id="PTHR34108">
    <property type="entry name" value="SEPTUM SITE-DETERMINING PROTEIN MINC"/>
    <property type="match status" value="1"/>
</dbReference>
<dbReference type="PANTHER" id="PTHR34108:SF1">
    <property type="entry name" value="SEPTUM SITE-DETERMINING PROTEIN MINC"/>
    <property type="match status" value="1"/>
</dbReference>
<dbReference type="Pfam" id="PF03775">
    <property type="entry name" value="MinC_C"/>
    <property type="match status" value="1"/>
</dbReference>
<dbReference type="Pfam" id="PF22642">
    <property type="entry name" value="MinC_N_1"/>
    <property type="match status" value="1"/>
</dbReference>
<dbReference type="SUPFAM" id="SSF63848">
    <property type="entry name" value="Cell-division inhibitor MinC, C-terminal domain"/>
    <property type="match status" value="1"/>
</dbReference>
<organism>
    <name type="scientific">Oceanobacillus iheyensis (strain DSM 14371 / CIP 107618 / JCM 11309 / KCTC 3954 / HTE831)</name>
    <dbReference type="NCBI Taxonomy" id="221109"/>
    <lineage>
        <taxon>Bacteria</taxon>
        <taxon>Bacillati</taxon>
        <taxon>Bacillota</taxon>
        <taxon>Bacilli</taxon>
        <taxon>Bacillales</taxon>
        <taxon>Bacillaceae</taxon>
        <taxon>Oceanobacillus</taxon>
    </lineage>
</organism>
<evidence type="ECO:0000255" key="1">
    <source>
        <dbReference type="HAMAP-Rule" id="MF_00267"/>
    </source>
</evidence>
<keyword id="KW-0131">Cell cycle</keyword>
<keyword id="KW-0132">Cell division</keyword>
<keyword id="KW-1185">Reference proteome</keyword>
<keyword id="KW-0717">Septation</keyword>
<accession>Q8EPP3</accession>
<proteinExistence type="inferred from homology"/>
<name>MINC_OCEIH</name>
<gene>
    <name evidence="1" type="primary">minC</name>
    <name type="ordered locus">OB2050</name>
</gene>
<sequence>MQDLKQIITIKGTRDGLSLFIDEDASFEEVLKELEEKIQFSKPKQDEPVVSVKVKLGNRYISGEKEEQIRQVITTDQRFKVIGIDSNLIPINDAKRWMDDSEVKVINRVVRSGQILEIQGDLLLVGDVNPGGRVVASGNIYILGNLLGIAHAGYHGDKDAFIAASYMKPTQLRIADYISRAPDYESDGVYMECGIIDTDQDKITIDSLKVLSKKRKEISGFERRMNNG</sequence>
<feature type="chain" id="PRO_0000189048" description="Probable septum site-determining protein MinC">
    <location>
        <begin position="1"/>
        <end position="228"/>
    </location>
</feature>